<evidence type="ECO:0000255" key="1">
    <source>
        <dbReference type="HAMAP-Rule" id="MF_00384"/>
    </source>
</evidence>
<dbReference type="EC" id="2.7.1.39" evidence="1"/>
<dbReference type="EMBL" id="CP000946">
    <property type="protein sequence ID" value="ACA79263.1"/>
    <property type="molecule type" value="Genomic_DNA"/>
</dbReference>
<dbReference type="RefSeq" id="WP_000241660.1">
    <property type="nucleotide sequence ID" value="NZ_MTFT01000024.1"/>
</dbReference>
<dbReference type="SMR" id="B1IRH0"/>
<dbReference type="GeneID" id="75202912"/>
<dbReference type="KEGG" id="ecl:EcolC_3652"/>
<dbReference type="HOGENOM" id="CLU_041243_1_1_6"/>
<dbReference type="UniPathway" id="UPA00050">
    <property type="reaction ID" value="UER00064"/>
</dbReference>
<dbReference type="GO" id="GO:0005737">
    <property type="term" value="C:cytoplasm"/>
    <property type="evidence" value="ECO:0007669"/>
    <property type="project" value="UniProtKB-SubCell"/>
</dbReference>
<dbReference type="GO" id="GO:0005524">
    <property type="term" value="F:ATP binding"/>
    <property type="evidence" value="ECO:0007669"/>
    <property type="project" value="UniProtKB-UniRule"/>
</dbReference>
<dbReference type="GO" id="GO:0004413">
    <property type="term" value="F:homoserine kinase activity"/>
    <property type="evidence" value="ECO:0007669"/>
    <property type="project" value="UniProtKB-UniRule"/>
</dbReference>
<dbReference type="GO" id="GO:0009088">
    <property type="term" value="P:threonine biosynthetic process"/>
    <property type="evidence" value="ECO:0007669"/>
    <property type="project" value="UniProtKB-UniRule"/>
</dbReference>
<dbReference type="FunFam" id="3.30.230.10:FF:000020">
    <property type="entry name" value="Homoserine kinase"/>
    <property type="match status" value="1"/>
</dbReference>
<dbReference type="FunFam" id="3.30.70.890:FF:000002">
    <property type="entry name" value="Homoserine kinase"/>
    <property type="match status" value="1"/>
</dbReference>
<dbReference type="Gene3D" id="3.30.230.10">
    <property type="match status" value="1"/>
</dbReference>
<dbReference type="Gene3D" id="3.30.70.890">
    <property type="entry name" value="GHMP kinase, C-terminal domain"/>
    <property type="match status" value="1"/>
</dbReference>
<dbReference type="HAMAP" id="MF_00384">
    <property type="entry name" value="Homoser_kinase"/>
    <property type="match status" value="1"/>
</dbReference>
<dbReference type="InterPro" id="IPR013750">
    <property type="entry name" value="GHMP_kinase_C_dom"/>
</dbReference>
<dbReference type="InterPro" id="IPR036554">
    <property type="entry name" value="GHMP_kinase_C_sf"/>
</dbReference>
<dbReference type="InterPro" id="IPR006204">
    <property type="entry name" value="GHMP_kinase_N_dom"/>
</dbReference>
<dbReference type="InterPro" id="IPR006203">
    <property type="entry name" value="GHMP_knse_ATP-bd_CS"/>
</dbReference>
<dbReference type="InterPro" id="IPR000870">
    <property type="entry name" value="Homoserine_kinase"/>
</dbReference>
<dbReference type="InterPro" id="IPR020568">
    <property type="entry name" value="Ribosomal_Su5_D2-typ_SF"/>
</dbReference>
<dbReference type="InterPro" id="IPR014721">
    <property type="entry name" value="Ribsml_uS5_D2-typ_fold_subgr"/>
</dbReference>
<dbReference type="NCBIfam" id="NF002288">
    <property type="entry name" value="PRK01212.1-4"/>
    <property type="match status" value="1"/>
</dbReference>
<dbReference type="NCBIfam" id="TIGR00191">
    <property type="entry name" value="thrB"/>
    <property type="match status" value="1"/>
</dbReference>
<dbReference type="PANTHER" id="PTHR20861:SF1">
    <property type="entry name" value="HOMOSERINE KINASE"/>
    <property type="match status" value="1"/>
</dbReference>
<dbReference type="PANTHER" id="PTHR20861">
    <property type="entry name" value="HOMOSERINE/4-DIPHOSPHOCYTIDYL-2-C-METHYL-D-ERYTHRITOL KINASE"/>
    <property type="match status" value="1"/>
</dbReference>
<dbReference type="Pfam" id="PF08544">
    <property type="entry name" value="GHMP_kinases_C"/>
    <property type="match status" value="1"/>
</dbReference>
<dbReference type="Pfam" id="PF00288">
    <property type="entry name" value="GHMP_kinases_N"/>
    <property type="match status" value="1"/>
</dbReference>
<dbReference type="PIRSF" id="PIRSF000676">
    <property type="entry name" value="Homoser_kin"/>
    <property type="match status" value="1"/>
</dbReference>
<dbReference type="PRINTS" id="PR00958">
    <property type="entry name" value="HOMSERKINASE"/>
</dbReference>
<dbReference type="SUPFAM" id="SSF55060">
    <property type="entry name" value="GHMP Kinase, C-terminal domain"/>
    <property type="match status" value="1"/>
</dbReference>
<dbReference type="SUPFAM" id="SSF54211">
    <property type="entry name" value="Ribosomal protein S5 domain 2-like"/>
    <property type="match status" value="1"/>
</dbReference>
<dbReference type="PROSITE" id="PS00627">
    <property type="entry name" value="GHMP_KINASES_ATP"/>
    <property type="match status" value="1"/>
</dbReference>
<gene>
    <name evidence="1" type="primary">thrB</name>
    <name type="ordered locus">EcolC_3652</name>
</gene>
<name>KHSE_ECOLC</name>
<reference key="1">
    <citation type="submission" date="2008-02" db="EMBL/GenBank/DDBJ databases">
        <title>Complete sequence of Escherichia coli C str. ATCC 8739.</title>
        <authorList>
            <person name="Copeland A."/>
            <person name="Lucas S."/>
            <person name="Lapidus A."/>
            <person name="Glavina del Rio T."/>
            <person name="Dalin E."/>
            <person name="Tice H."/>
            <person name="Bruce D."/>
            <person name="Goodwin L."/>
            <person name="Pitluck S."/>
            <person name="Kiss H."/>
            <person name="Brettin T."/>
            <person name="Detter J.C."/>
            <person name="Han C."/>
            <person name="Kuske C.R."/>
            <person name="Schmutz J."/>
            <person name="Larimer F."/>
            <person name="Land M."/>
            <person name="Hauser L."/>
            <person name="Kyrpides N."/>
            <person name="Mikhailova N."/>
            <person name="Ingram L."/>
            <person name="Richardson P."/>
        </authorList>
    </citation>
    <scope>NUCLEOTIDE SEQUENCE [LARGE SCALE GENOMIC DNA]</scope>
    <source>
        <strain>ATCC 8739 / DSM 1576 / NBRC 3972 / NCIMB 8545 / WDCM 00012 / Crooks</strain>
    </source>
</reference>
<organism>
    <name type="scientific">Escherichia coli (strain ATCC 8739 / DSM 1576 / NBRC 3972 / NCIMB 8545 / WDCM 00012 / Crooks)</name>
    <dbReference type="NCBI Taxonomy" id="481805"/>
    <lineage>
        <taxon>Bacteria</taxon>
        <taxon>Pseudomonadati</taxon>
        <taxon>Pseudomonadota</taxon>
        <taxon>Gammaproteobacteria</taxon>
        <taxon>Enterobacterales</taxon>
        <taxon>Enterobacteriaceae</taxon>
        <taxon>Escherichia</taxon>
    </lineage>
</organism>
<comment type="function">
    <text evidence="1">Catalyzes the ATP-dependent phosphorylation of L-homoserine to L-homoserine phosphate.</text>
</comment>
<comment type="catalytic activity">
    <reaction evidence="1">
        <text>L-homoserine + ATP = O-phospho-L-homoserine + ADP + H(+)</text>
        <dbReference type="Rhea" id="RHEA:13985"/>
        <dbReference type="ChEBI" id="CHEBI:15378"/>
        <dbReference type="ChEBI" id="CHEBI:30616"/>
        <dbReference type="ChEBI" id="CHEBI:57476"/>
        <dbReference type="ChEBI" id="CHEBI:57590"/>
        <dbReference type="ChEBI" id="CHEBI:456216"/>
        <dbReference type="EC" id="2.7.1.39"/>
    </reaction>
</comment>
<comment type="pathway">
    <text evidence="1">Amino-acid biosynthesis; L-threonine biosynthesis; L-threonine from L-aspartate: step 4/5.</text>
</comment>
<comment type="subcellular location">
    <subcellularLocation>
        <location evidence="1">Cytoplasm</location>
    </subcellularLocation>
</comment>
<comment type="similarity">
    <text evidence="1">Belongs to the GHMP kinase family. Homoserine kinase subfamily.</text>
</comment>
<accession>B1IRH0</accession>
<sequence length="310" mass="33610">MVKVYAPASSANMSVGFDVLGAAVTPVDGALLGDVVTVEAAETFSLNNLGRFADKLPSEPRENIVYQCWERFCQELGKQIPVAMTLEKNMPIGSGLGSSACSVVAALMAMNEHCGKPLNDTRLLALMGELEGRISGSIHYDNVAPCFLGGMQLMIEENDIISQQVPGFDEWLWVLAYPGIKVSTAEARAILPAQYRRQDCIAHGRHLAGFIHACYSRQPELAAKLMKDVIAEPYRERLLPGFRQARQAVAEIGAVASGISGSGPTLFALCDKPDTAQRVADWLGKNYLQNQEGFVHICRLDTAGARVLEN</sequence>
<feature type="chain" id="PRO_1000080120" description="Homoserine kinase">
    <location>
        <begin position="1"/>
        <end position="310"/>
    </location>
</feature>
<feature type="binding site" evidence="1">
    <location>
        <begin position="91"/>
        <end position="101"/>
    </location>
    <ligand>
        <name>ATP</name>
        <dbReference type="ChEBI" id="CHEBI:30616"/>
    </ligand>
</feature>
<keyword id="KW-0028">Amino-acid biosynthesis</keyword>
<keyword id="KW-0067">ATP-binding</keyword>
<keyword id="KW-0963">Cytoplasm</keyword>
<keyword id="KW-0418">Kinase</keyword>
<keyword id="KW-0547">Nucleotide-binding</keyword>
<keyword id="KW-0791">Threonine biosynthesis</keyword>
<keyword id="KW-0808">Transferase</keyword>
<protein>
    <recommendedName>
        <fullName evidence="1">Homoserine kinase</fullName>
        <shortName evidence="1">HK</shortName>
        <shortName evidence="1">HSK</shortName>
        <ecNumber evidence="1">2.7.1.39</ecNumber>
    </recommendedName>
</protein>
<proteinExistence type="inferred from homology"/>